<organism>
    <name type="scientific">Thermotoga maritima (strain ATCC 43589 / DSM 3109 / JCM 10099 / NBRC 100826 / MSB8)</name>
    <dbReference type="NCBI Taxonomy" id="243274"/>
    <lineage>
        <taxon>Bacteria</taxon>
        <taxon>Thermotogati</taxon>
        <taxon>Thermotogota</taxon>
        <taxon>Thermotogae</taxon>
        <taxon>Thermotogales</taxon>
        <taxon>Thermotogaceae</taxon>
        <taxon>Thermotoga</taxon>
    </lineage>
</organism>
<dbReference type="EC" id="5.4.2.10" evidence="1"/>
<dbReference type="EMBL" id="AE000512">
    <property type="protein sequence ID" value="AAD35277.1"/>
    <property type="molecule type" value="Genomic_DNA"/>
</dbReference>
<dbReference type="PIR" id="C72408">
    <property type="entry name" value="C72408"/>
</dbReference>
<dbReference type="RefSeq" id="NP_227999.1">
    <property type="nucleotide sequence ID" value="NC_000853.1"/>
</dbReference>
<dbReference type="RefSeq" id="WP_004082821.1">
    <property type="nucleotide sequence ID" value="NZ_CP011107.1"/>
</dbReference>
<dbReference type="SMR" id="Q9WY28"/>
<dbReference type="FunCoup" id="Q9WY28">
    <property type="interactions" value="377"/>
</dbReference>
<dbReference type="STRING" id="243274.TM_0184"/>
<dbReference type="PaxDb" id="243274-THEMA_03855"/>
<dbReference type="DNASU" id="897032"/>
<dbReference type="EnsemblBacteria" id="AAD35277">
    <property type="protein sequence ID" value="AAD35277"/>
    <property type="gene ID" value="TM_0184"/>
</dbReference>
<dbReference type="KEGG" id="tma:TM0184"/>
<dbReference type="KEGG" id="tmm:Tmari_0182"/>
<dbReference type="KEGG" id="tmw:THMA_0185"/>
<dbReference type="eggNOG" id="COG1109">
    <property type="taxonomic scope" value="Bacteria"/>
</dbReference>
<dbReference type="InParanoid" id="Q9WY28"/>
<dbReference type="OrthoDB" id="9806956at2"/>
<dbReference type="Proteomes" id="UP000008183">
    <property type="component" value="Chromosome"/>
</dbReference>
<dbReference type="GO" id="GO:0005829">
    <property type="term" value="C:cytosol"/>
    <property type="evidence" value="ECO:0000318"/>
    <property type="project" value="GO_Central"/>
</dbReference>
<dbReference type="GO" id="GO:0000287">
    <property type="term" value="F:magnesium ion binding"/>
    <property type="evidence" value="ECO:0007669"/>
    <property type="project" value="UniProtKB-UniRule"/>
</dbReference>
<dbReference type="GO" id="GO:0008966">
    <property type="term" value="F:phosphoglucosamine mutase activity"/>
    <property type="evidence" value="ECO:0000318"/>
    <property type="project" value="GO_Central"/>
</dbReference>
<dbReference type="GO" id="GO:0004615">
    <property type="term" value="F:phosphomannomutase activity"/>
    <property type="evidence" value="ECO:0000318"/>
    <property type="project" value="GO_Central"/>
</dbReference>
<dbReference type="GO" id="GO:0005975">
    <property type="term" value="P:carbohydrate metabolic process"/>
    <property type="evidence" value="ECO:0007669"/>
    <property type="project" value="InterPro"/>
</dbReference>
<dbReference type="GO" id="GO:0009252">
    <property type="term" value="P:peptidoglycan biosynthetic process"/>
    <property type="evidence" value="ECO:0000318"/>
    <property type="project" value="GO_Central"/>
</dbReference>
<dbReference type="GO" id="GO:0006048">
    <property type="term" value="P:UDP-N-acetylglucosamine biosynthetic process"/>
    <property type="evidence" value="ECO:0000318"/>
    <property type="project" value="GO_Central"/>
</dbReference>
<dbReference type="CDD" id="cd05802">
    <property type="entry name" value="GlmM"/>
    <property type="match status" value="1"/>
</dbReference>
<dbReference type="FunFam" id="3.40.120.10:FF:000001">
    <property type="entry name" value="Phosphoglucosamine mutase"/>
    <property type="match status" value="1"/>
</dbReference>
<dbReference type="FunFam" id="3.40.120.10:FF:000002">
    <property type="entry name" value="Phosphoglucosamine mutase"/>
    <property type="match status" value="1"/>
</dbReference>
<dbReference type="Gene3D" id="3.40.120.10">
    <property type="entry name" value="Alpha-D-Glucose-1,6-Bisphosphate, subunit A, domain 3"/>
    <property type="match status" value="3"/>
</dbReference>
<dbReference type="Gene3D" id="3.30.310.50">
    <property type="entry name" value="Alpha-D-phosphohexomutase, C-terminal domain"/>
    <property type="match status" value="1"/>
</dbReference>
<dbReference type="HAMAP" id="MF_01554_B">
    <property type="entry name" value="GlmM_B"/>
    <property type="match status" value="1"/>
</dbReference>
<dbReference type="InterPro" id="IPR005844">
    <property type="entry name" value="A-D-PHexomutase_a/b/a-I"/>
</dbReference>
<dbReference type="InterPro" id="IPR016055">
    <property type="entry name" value="A-D-PHexomutase_a/b/a-I/II/III"/>
</dbReference>
<dbReference type="InterPro" id="IPR005845">
    <property type="entry name" value="A-D-PHexomutase_a/b/a-II"/>
</dbReference>
<dbReference type="InterPro" id="IPR005846">
    <property type="entry name" value="A-D-PHexomutase_a/b/a-III"/>
</dbReference>
<dbReference type="InterPro" id="IPR005843">
    <property type="entry name" value="A-D-PHexomutase_C"/>
</dbReference>
<dbReference type="InterPro" id="IPR036900">
    <property type="entry name" value="A-D-PHexomutase_C_sf"/>
</dbReference>
<dbReference type="InterPro" id="IPR016066">
    <property type="entry name" value="A-D-PHexomutase_CS"/>
</dbReference>
<dbReference type="InterPro" id="IPR005841">
    <property type="entry name" value="Alpha-D-phosphohexomutase_SF"/>
</dbReference>
<dbReference type="InterPro" id="IPR006352">
    <property type="entry name" value="GlmM_bact"/>
</dbReference>
<dbReference type="InterPro" id="IPR050060">
    <property type="entry name" value="Phosphoglucosamine_mutase"/>
</dbReference>
<dbReference type="NCBIfam" id="TIGR01455">
    <property type="entry name" value="glmM"/>
    <property type="match status" value="1"/>
</dbReference>
<dbReference type="PANTHER" id="PTHR42946:SF1">
    <property type="entry name" value="PHOSPHOGLUCOMUTASE (ALPHA-D-GLUCOSE-1,6-BISPHOSPHATE-DEPENDENT)"/>
    <property type="match status" value="1"/>
</dbReference>
<dbReference type="PANTHER" id="PTHR42946">
    <property type="entry name" value="PHOSPHOHEXOSE MUTASE"/>
    <property type="match status" value="1"/>
</dbReference>
<dbReference type="Pfam" id="PF02878">
    <property type="entry name" value="PGM_PMM_I"/>
    <property type="match status" value="1"/>
</dbReference>
<dbReference type="Pfam" id="PF02879">
    <property type="entry name" value="PGM_PMM_II"/>
    <property type="match status" value="1"/>
</dbReference>
<dbReference type="Pfam" id="PF02880">
    <property type="entry name" value="PGM_PMM_III"/>
    <property type="match status" value="1"/>
</dbReference>
<dbReference type="Pfam" id="PF00408">
    <property type="entry name" value="PGM_PMM_IV"/>
    <property type="match status" value="1"/>
</dbReference>
<dbReference type="PRINTS" id="PR00509">
    <property type="entry name" value="PGMPMM"/>
</dbReference>
<dbReference type="SUPFAM" id="SSF55957">
    <property type="entry name" value="Phosphoglucomutase, C-terminal domain"/>
    <property type="match status" value="1"/>
</dbReference>
<dbReference type="SUPFAM" id="SSF53738">
    <property type="entry name" value="Phosphoglucomutase, first 3 domains"/>
    <property type="match status" value="3"/>
</dbReference>
<dbReference type="PROSITE" id="PS00710">
    <property type="entry name" value="PGM_PMM"/>
    <property type="match status" value="1"/>
</dbReference>
<feature type="chain" id="PRO_0000147991" description="Phosphoglucosamine mutase">
    <location>
        <begin position="1"/>
        <end position="429"/>
    </location>
</feature>
<feature type="active site" description="Phosphoserine intermediate" evidence="1">
    <location>
        <position position="96"/>
    </location>
</feature>
<feature type="binding site" description="via phosphate group" evidence="1">
    <location>
        <position position="96"/>
    </location>
    <ligand>
        <name>Mg(2+)</name>
        <dbReference type="ChEBI" id="CHEBI:18420"/>
    </ligand>
</feature>
<feature type="binding site" evidence="1">
    <location>
        <position position="230"/>
    </location>
    <ligand>
        <name>Mg(2+)</name>
        <dbReference type="ChEBI" id="CHEBI:18420"/>
    </ligand>
</feature>
<feature type="binding site" evidence="1">
    <location>
        <position position="232"/>
    </location>
    <ligand>
        <name>Mg(2+)</name>
        <dbReference type="ChEBI" id="CHEBI:18420"/>
    </ligand>
</feature>
<feature type="binding site" evidence="1">
    <location>
        <position position="234"/>
    </location>
    <ligand>
        <name>Mg(2+)</name>
        <dbReference type="ChEBI" id="CHEBI:18420"/>
    </ligand>
</feature>
<feature type="modified residue" description="Phosphoserine" evidence="1">
    <location>
        <position position="96"/>
    </location>
</feature>
<keyword id="KW-0413">Isomerase</keyword>
<keyword id="KW-0460">Magnesium</keyword>
<keyword id="KW-0479">Metal-binding</keyword>
<keyword id="KW-0597">Phosphoprotein</keyword>
<keyword id="KW-1185">Reference proteome</keyword>
<accession>Q9WY28</accession>
<comment type="function">
    <text evidence="1">Catalyzes the conversion of glucosamine-6-phosphate to glucosamine-1-phosphate.</text>
</comment>
<comment type="catalytic activity">
    <reaction evidence="1">
        <text>alpha-D-glucosamine 1-phosphate = D-glucosamine 6-phosphate</text>
        <dbReference type="Rhea" id="RHEA:23424"/>
        <dbReference type="ChEBI" id="CHEBI:58516"/>
        <dbReference type="ChEBI" id="CHEBI:58725"/>
        <dbReference type="EC" id="5.4.2.10"/>
    </reaction>
</comment>
<comment type="cofactor">
    <cofactor evidence="1">
        <name>Mg(2+)</name>
        <dbReference type="ChEBI" id="CHEBI:18420"/>
    </cofactor>
    <text evidence="1">Binds 1 Mg(2+) ion per subunit.</text>
</comment>
<comment type="PTM">
    <text evidence="1">Activated by phosphorylation.</text>
</comment>
<comment type="similarity">
    <text evidence="1">Belongs to the phosphohexose mutase family.</text>
</comment>
<sequence>MRVKYFGTDGIRGIFGETLTDELAFKVGKALGEIVGEGKVIVGKDTRVSGDSLEAAISAGLTSMGVDVLLCGILPTPAVALLTRITRSFGVVISASHNPPEYNGIKVLKGGYKIPDEMEAEIEKRLENGSFLTRSVVGRTKSFREGRDMYIGAVLEMFRDLDLTGEMVSLDLANGATTTTAREVFEFLGAKVEVFNDSQDGLLINQGCGATHPRFLAEEMKNGKVGFTFDGDGDRVIAVDEERNVVNGDRIIGILAVGLKEEGRLNSDTVVGTVMTNGGLEDFLKEKGIRLLRTKVGDKYVLEKMLESGANLGGERSGHIIILDRSTTGDGLITALELMRVLKRSGRKLSDFAKEIPDYPQITKNVRRTERMSLENENLRKIVEESTSRGYRVVIRPSGTEPVIRITVEGKDREEIEKIVEEISRVLES</sequence>
<name>GLMM_THEMA</name>
<reference key="1">
    <citation type="journal article" date="1999" name="Nature">
        <title>Evidence for lateral gene transfer between Archaea and Bacteria from genome sequence of Thermotoga maritima.</title>
        <authorList>
            <person name="Nelson K.E."/>
            <person name="Clayton R.A."/>
            <person name="Gill S.R."/>
            <person name="Gwinn M.L."/>
            <person name="Dodson R.J."/>
            <person name="Haft D.H."/>
            <person name="Hickey E.K."/>
            <person name="Peterson J.D."/>
            <person name="Nelson W.C."/>
            <person name="Ketchum K.A."/>
            <person name="McDonald L.A."/>
            <person name="Utterback T.R."/>
            <person name="Malek J.A."/>
            <person name="Linher K.D."/>
            <person name="Garrett M.M."/>
            <person name="Stewart A.M."/>
            <person name="Cotton M.D."/>
            <person name="Pratt M.S."/>
            <person name="Phillips C.A."/>
            <person name="Richardson D.L."/>
            <person name="Heidelberg J.F."/>
            <person name="Sutton G.G."/>
            <person name="Fleischmann R.D."/>
            <person name="Eisen J.A."/>
            <person name="White O."/>
            <person name="Salzberg S.L."/>
            <person name="Smith H.O."/>
            <person name="Venter J.C."/>
            <person name="Fraser C.M."/>
        </authorList>
    </citation>
    <scope>NUCLEOTIDE SEQUENCE [LARGE SCALE GENOMIC DNA]</scope>
    <source>
        <strain>ATCC 43589 / DSM 3109 / JCM 10099 / NBRC 100826 / MSB8</strain>
    </source>
</reference>
<protein>
    <recommendedName>
        <fullName evidence="1">Phosphoglucosamine mutase</fullName>
        <ecNumber evidence="1">5.4.2.10</ecNumber>
    </recommendedName>
</protein>
<evidence type="ECO:0000255" key="1">
    <source>
        <dbReference type="HAMAP-Rule" id="MF_01554"/>
    </source>
</evidence>
<gene>
    <name evidence="1" type="primary">glmM</name>
    <name type="ordered locus">TM_0184</name>
</gene>
<proteinExistence type="inferred from homology"/>